<organism>
    <name type="scientific">Candida albicans (strain SC5314 / ATCC MYA-2876)</name>
    <name type="common">Yeast</name>
    <dbReference type="NCBI Taxonomy" id="237561"/>
    <lineage>
        <taxon>Eukaryota</taxon>
        <taxon>Fungi</taxon>
        <taxon>Dikarya</taxon>
        <taxon>Ascomycota</taxon>
        <taxon>Saccharomycotina</taxon>
        <taxon>Pichiomycetes</taxon>
        <taxon>Debaryomycetaceae</taxon>
        <taxon>Candida/Lodderomyces clade</taxon>
        <taxon>Candida</taxon>
    </lineage>
</organism>
<gene>
    <name type="primary">YSH1</name>
    <name type="ordered locus">CAALFM_C206230WA</name>
    <name type="ORF">CaO19.12941</name>
    <name type="ORF">CaO19.5486</name>
</gene>
<feature type="chain" id="PRO_0000238898" description="Endoribonuclease YSH1">
    <location>
        <begin position="1"/>
        <end position="870"/>
    </location>
</feature>
<feature type="region of interest" description="Disordered" evidence="3">
    <location>
        <begin position="598"/>
        <end position="627"/>
    </location>
</feature>
<feature type="compositionally biased region" description="Acidic residues" evidence="3">
    <location>
        <begin position="601"/>
        <end position="612"/>
    </location>
</feature>
<feature type="compositionally biased region" description="Polar residues" evidence="3">
    <location>
        <begin position="618"/>
        <end position="627"/>
    </location>
</feature>
<feature type="active site" description="Proton donor" evidence="2">
    <location>
        <position position="499"/>
    </location>
</feature>
<feature type="binding site" evidence="1">
    <location>
        <position position="159"/>
    </location>
    <ligand>
        <name>Zn(2+)</name>
        <dbReference type="ChEBI" id="CHEBI:29105"/>
        <label>1</label>
    </ligand>
</feature>
<feature type="binding site" evidence="1">
    <location>
        <position position="161"/>
    </location>
    <ligand>
        <name>Zn(2+)</name>
        <dbReference type="ChEBI" id="CHEBI:29105"/>
        <label>1</label>
    </ligand>
</feature>
<feature type="binding site" evidence="1">
    <location>
        <position position="163"/>
    </location>
    <ligand>
        <name>Zn(2+)</name>
        <dbReference type="ChEBI" id="CHEBI:29105"/>
        <label>2</label>
    </ligand>
</feature>
<feature type="binding site" evidence="1">
    <location>
        <position position="164"/>
    </location>
    <ligand>
        <name>Zn(2+)</name>
        <dbReference type="ChEBI" id="CHEBI:29105"/>
        <label>2</label>
    </ligand>
</feature>
<feature type="binding site" evidence="1">
    <location>
        <position position="256"/>
    </location>
    <ligand>
        <name>Zn(2+)</name>
        <dbReference type="ChEBI" id="CHEBI:29105"/>
        <label>1</label>
    </ligand>
</feature>
<feature type="binding site" evidence="1">
    <location>
        <position position="277"/>
    </location>
    <ligand>
        <name>Zn(2+)</name>
        <dbReference type="ChEBI" id="CHEBI:29105"/>
        <label>1</label>
    </ligand>
</feature>
<feature type="binding site" evidence="1">
    <location>
        <position position="277"/>
    </location>
    <ligand>
        <name>Zn(2+)</name>
        <dbReference type="ChEBI" id="CHEBI:29105"/>
        <label>2</label>
    </ligand>
</feature>
<feature type="binding site" evidence="1">
    <location>
        <position position="521"/>
    </location>
    <ligand>
        <name>Zn(2+)</name>
        <dbReference type="ChEBI" id="CHEBI:29105"/>
        <label>2</label>
    </ligand>
</feature>
<protein>
    <recommendedName>
        <fullName>Endoribonuclease YSH1</fullName>
        <ecNumber>3.1.27.-</ecNumber>
    </recommendedName>
    <alternativeName>
        <fullName>mRNA 3'-end-processing protein YSH1</fullName>
    </alternativeName>
</protein>
<keyword id="KW-0255">Endonuclease</keyword>
<keyword id="KW-0378">Hydrolase</keyword>
<keyword id="KW-0479">Metal-binding</keyword>
<keyword id="KW-0507">mRNA processing</keyword>
<keyword id="KW-0540">Nuclease</keyword>
<keyword id="KW-0539">Nucleus</keyword>
<keyword id="KW-1185">Reference proteome</keyword>
<keyword id="KW-0862">Zinc</keyword>
<evidence type="ECO:0000250" key="1"/>
<evidence type="ECO:0000255" key="2"/>
<evidence type="ECO:0000256" key="3">
    <source>
        <dbReference type="SAM" id="MobiDB-lite"/>
    </source>
</evidence>
<evidence type="ECO:0000305" key="4"/>
<dbReference type="EC" id="3.1.27.-"/>
<dbReference type="EMBL" id="CP017624">
    <property type="protein sequence ID" value="AOW27631.1"/>
    <property type="molecule type" value="Genomic_DNA"/>
</dbReference>
<dbReference type="RefSeq" id="XP_711478.1">
    <property type="nucleotide sequence ID" value="XM_706386.1"/>
</dbReference>
<dbReference type="SMR" id="Q59P50"/>
<dbReference type="FunCoup" id="Q59P50">
    <property type="interactions" value="1022"/>
</dbReference>
<dbReference type="STRING" id="237561.Q59P50"/>
<dbReference type="EnsemblFungi" id="C2_06230W_A-T">
    <property type="protein sequence ID" value="C2_06230W_A-T-p1"/>
    <property type="gene ID" value="C2_06230W_A"/>
</dbReference>
<dbReference type="GeneID" id="3646911"/>
<dbReference type="KEGG" id="cal:CAALFM_C206230WA"/>
<dbReference type="CGD" id="CAL0000178545">
    <property type="gene designation" value="orf19.12941"/>
</dbReference>
<dbReference type="VEuPathDB" id="FungiDB:C2_06230W_A"/>
<dbReference type="eggNOG" id="KOG1137">
    <property type="taxonomic scope" value="Eukaryota"/>
</dbReference>
<dbReference type="HOGENOM" id="CLU_009673_2_3_1"/>
<dbReference type="InParanoid" id="Q59P50"/>
<dbReference type="OrthoDB" id="10249535at2759"/>
<dbReference type="PRO" id="PR:Q59P50"/>
<dbReference type="Proteomes" id="UP000000559">
    <property type="component" value="Chromosome 2"/>
</dbReference>
<dbReference type="GO" id="GO:0005847">
    <property type="term" value="C:mRNA cleavage and polyadenylation specificity factor complex"/>
    <property type="evidence" value="ECO:0000318"/>
    <property type="project" value="GO_Central"/>
</dbReference>
<dbReference type="GO" id="GO:0004534">
    <property type="term" value="F:5'-3' RNA exonuclease activity"/>
    <property type="evidence" value="ECO:0000318"/>
    <property type="project" value="GO_Central"/>
</dbReference>
<dbReference type="GO" id="GO:0046872">
    <property type="term" value="F:metal ion binding"/>
    <property type="evidence" value="ECO:0007669"/>
    <property type="project" value="UniProtKB-KW"/>
</dbReference>
<dbReference type="GO" id="GO:0003723">
    <property type="term" value="F:RNA binding"/>
    <property type="evidence" value="ECO:0000318"/>
    <property type="project" value="GO_Central"/>
</dbReference>
<dbReference type="GO" id="GO:0004521">
    <property type="term" value="F:RNA endonuclease activity"/>
    <property type="evidence" value="ECO:0000318"/>
    <property type="project" value="GO_Central"/>
</dbReference>
<dbReference type="GO" id="GO:0006397">
    <property type="term" value="P:mRNA processing"/>
    <property type="evidence" value="ECO:0007669"/>
    <property type="project" value="UniProtKB-KW"/>
</dbReference>
<dbReference type="GO" id="GO:0009410">
    <property type="term" value="P:response to xenobiotic stimulus"/>
    <property type="evidence" value="ECO:0000315"/>
    <property type="project" value="CGD"/>
</dbReference>
<dbReference type="GO" id="GO:0031126">
    <property type="term" value="P:sno(s)RNA 3'-end processing"/>
    <property type="evidence" value="ECO:0007669"/>
    <property type="project" value="EnsemblFungi"/>
</dbReference>
<dbReference type="GO" id="GO:0034247">
    <property type="term" value="P:snoRNA splicing"/>
    <property type="evidence" value="ECO:0007669"/>
    <property type="project" value="EnsemblFungi"/>
</dbReference>
<dbReference type="GO" id="GO:0006369">
    <property type="term" value="P:termination of RNA polymerase II transcription"/>
    <property type="evidence" value="ECO:0007669"/>
    <property type="project" value="EnsemblFungi"/>
</dbReference>
<dbReference type="CDD" id="cd16292">
    <property type="entry name" value="CPSF3-like_MBL-fold"/>
    <property type="match status" value="1"/>
</dbReference>
<dbReference type="FunFam" id="3.60.15.10:FF:000001">
    <property type="entry name" value="Cleavage and polyadenylation specificity factor"/>
    <property type="match status" value="1"/>
</dbReference>
<dbReference type="FunFam" id="3.40.50.10890:FF:000004">
    <property type="entry name" value="Cleavage and polyadenylation specifity factor"/>
    <property type="match status" value="1"/>
</dbReference>
<dbReference type="Gene3D" id="3.40.50.10890">
    <property type="match status" value="1"/>
</dbReference>
<dbReference type="Gene3D" id="3.60.15.10">
    <property type="entry name" value="Ribonuclease Z/Hydroxyacylglutathione hydrolase-like"/>
    <property type="match status" value="1"/>
</dbReference>
<dbReference type="InterPro" id="IPR022712">
    <property type="entry name" value="Beta_Casp"/>
</dbReference>
<dbReference type="InterPro" id="IPR021718">
    <property type="entry name" value="CPSF73-100_C"/>
</dbReference>
<dbReference type="InterPro" id="IPR050698">
    <property type="entry name" value="MBL"/>
</dbReference>
<dbReference type="InterPro" id="IPR001279">
    <property type="entry name" value="Metallo-B-lactamas"/>
</dbReference>
<dbReference type="InterPro" id="IPR036866">
    <property type="entry name" value="RibonucZ/Hydroxyglut_hydro"/>
</dbReference>
<dbReference type="InterPro" id="IPR011108">
    <property type="entry name" value="RMMBL"/>
</dbReference>
<dbReference type="PANTHER" id="PTHR11203">
    <property type="entry name" value="CLEAVAGE AND POLYADENYLATION SPECIFICITY FACTOR FAMILY MEMBER"/>
    <property type="match status" value="1"/>
</dbReference>
<dbReference type="PANTHER" id="PTHR11203:SF11">
    <property type="entry name" value="CLEAVAGE AND POLYADENYLATION SPECIFICITY FACTOR SUBUNIT 3"/>
    <property type="match status" value="1"/>
</dbReference>
<dbReference type="Pfam" id="PF10996">
    <property type="entry name" value="Beta-Casp"/>
    <property type="match status" value="1"/>
</dbReference>
<dbReference type="Pfam" id="PF11718">
    <property type="entry name" value="CPSF73-100_C"/>
    <property type="match status" value="1"/>
</dbReference>
<dbReference type="Pfam" id="PF16661">
    <property type="entry name" value="Lactamase_B_6"/>
    <property type="match status" value="1"/>
</dbReference>
<dbReference type="Pfam" id="PF07521">
    <property type="entry name" value="RMMBL"/>
    <property type="match status" value="1"/>
</dbReference>
<dbReference type="SMART" id="SM01027">
    <property type="entry name" value="Beta-Casp"/>
    <property type="match status" value="1"/>
</dbReference>
<dbReference type="SMART" id="SM01098">
    <property type="entry name" value="CPSF73-100_C"/>
    <property type="match status" value="1"/>
</dbReference>
<dbReference type="SMART" id="SM00849">
    <property type="entry name" value="Lactamase_B"/>
    <property type="match status" value="1"/>
</dbReference>
<dbReference type="SUPFAM" id="SSF56281">
    <property type="entry name" value="Metallo-hydrolase/oxidoreductase"/>
    <property type="match status" value="1"/>
</dbReference>
<comment type="function">
    <text evidence="1">Component of the cleavage factor I (CF I) involved in pre-mRNA 3'-end processing.</text>
</comment>
<comment type="subcellular location">
    <subcellularLocation>
        <location evidence="1">Nucleus</location>
    </subcellularLocation>
</comment>
<comment type="similarity">
    <text evidence="4">Belongs to the metallo-beta-lactamase superfamily. RNA-metabolizing metallo-beta-lactamase-like family. CPSF2/YSH1 subfamily.</text>
</comment>
<name>YSH1_CANAL</name>
<proteinExistence type="inferred from homology"/>
<accession>Q59P50</accession>
<accession>A0A1D8PHM3</accession>
<reference key="1">
    <citation type="journal article" date="2004" name="Proc. Natl. Acad. Sci. U.S.A.">
        <title>The diploid genome sequence of Candida albicans.</title>
        <authorList>
            <person name="Jones T."/>
            <person name="Federspiel N.A."/>
            <person name="Chibana H."/>
            <person name="Dungan J."/>
            <person name="Kalman S."/>
            <person name="Magee B.B."/>
            <person name="Newport G."/>
            <person name="Thorstenson Y.R."/>
            <person name="Agabian N."/>
            <person name="Magee P.T."/>
            <person name="Davis R.W."/>
            <person name="Scherer S."/>
        </authorList>
    </citation>
    <scope>NUCLEOTIDE SEQUENCE [LARGE SCALE GENOMIC DNA]</scope>
    <source>
        <strain>SC5314 / ATCC MYA-2876</strain>
    </source>
</reference>
<reference key="2">
    <citation type="journal article" date="2007" name="Genome Biol.">
        <title>Assembly of the Candida albicans genome into sixteen supercontigs aligned on the eight chromosomes.</title>
        <authorList>
            <person name="van het Hoog M."/>
            <person name="Rast T.J."/>
            <person name="Martchenko M."/>
            <person name="Grindle S."/>
            <person name="Dignard D."/>
            <person name="Hogues H."/>
            <person name="Cuomo C."/>
            <person name="Berriman M."/>
            <person name="Scherer S."/>
            <person name="Magee B.B."/>
            <person name="Whiteway M."/>
            <person name="Chibana H."/>
            <person name="Nantel A."/>
            <person name="Magee P.T."/>
        </authorList>
    </citation>
    <scope>GENOME REANNOTATION</scope>
    <source>
        <strain>SC5314 / ATCC MYA-2876</strain>
    </source>
</reference>
<reference key="3">
    <citation type="journal article" date="2013" name="Genome Biol.">
        <title>Assembly of a phased diploid Candida albicans genome facilitates allele-specific measurements and provides a simple model for repeat and indel structure.</title>
        <authorList>
            <person name="Muzzey D."/>
            <person name="Schwartz K."/>
            <person name="Weissman J.S."/>
            <person name="Sherlock G."/>
        </authorList>
    </citation>
    <scope>NUCLEOTIDE SEQUENCE [LARGE SCALE GENOMIC DNA]</scope>
    <scope>GENOME REANNOTATION</scope>
    <source>
        <strain>SC5314 / ATCC MYA-2876</strain>
    </source>
</reference>
<sequence length="870" mass="97899">MCIQPDSLEDAYKIPRPVHREEFTQLSPSFFQTATFQLEKTNEKNNIEEPKKNKAFLNSKIIYKDLFEIRKLSNNFVNTSHPTCTETMNEQNEFSDEENFKFFGLGGCNEVGRSCHIIEYKNKVIMLDSGMHPALSGHASFPYFDEYDISKVDILLISHFHVDHSASLPYVMQQSNFRGKVFMTHATKAIYRWLMQDFVRVTSIGNSRSEDGGGGEGSNLYTDDDIMKSFDRIETIDYHSTMEIDGIRFTAYHAGHVLGACMYFIEIGGLKVLFTGDYSREENRHLHAAEVPPLKPDILISESTFGTGTLEPRIELERKLTTHIHATIAKGGRVLLPVFALGNAQELLLILDEYWSQNEDLQNVNVFYASNLAKKCMAVYETYTGIMNDKIRLSSASSEKSNPFDFKYIKSIKDLSKFQDMGPSVVVATPGMLQAGVSRQLLEKWAPDGKNLVILTGYSVEGTMAKELLKEPTMIQSATNPDMTIPRRIGIEEISFAAHVDFQQNSEFIEKVSPSKVILVHGDSVPMGRLKSALLSKYASRKGTDQEVKVYNPKNCEELIIGFKGLKIAKVLGSLAEEQLQVLKKIIQDEVSAENSKITELTEEKEEADEIKEDNGETDTTQKPNESSINVLKTGQVVSGVLVSKDFNLNLLQLQDLHEFTQLSTSIVKSKMHLKINADISLMVWHLEQMFGYINVINDDDEEWECVIMDVVDVFIDRSKGPGLFITVEWINDNLMADSLADSVIAILYSIDSSPASVKLSSQNHNHGDNHIVKKEDSMEIDRPVEAHAKTDIKSRIERIALLLKAQFGDSLKELPEEKAIIQIGKTVANVDYKRLEVECSSKVLKDRVENVIKRGCQLTAPLSQNPKIA</sequence>